<sequence>MLLDTLQTQFRHYFPTQRNFVLGLSGGIDSIVLLHLLAELQLNLRAVHIHHGLSPNADNWAAFCEQVCKRLKIPFILQKVTVDRSEGIEAGARAARYQAIGEIIQPNEVLVTAHHLDDQTETFLLALKRGSGIKGLSAMQAVGFWQNFTIFRPLLNVSKAQIEQYALQQQFTWIEDESNHDSHYDRNFLRNEVLPIVNQRWQHFSQMVARSAQHCAEQQMLLEELLAQELQRYADFSEKRLNIEAFPQFSLAKQQQLIRLWLEKCGAQMPSTAQLMQIIQQTIYADVDKNPQLKLADFWLRRYQHHLYLTGELLEPDDFCQPLFAQQSLTLPDGIGELQHLGDSIIYQKSGKIDRLLLPKVLVNAPLQVKLTHQGKVKQYAKPMREEMKKRYQQAQVPVWLRKRTPLIFFHDQLVFICH</sequence>
<name>TILS_ACTP7</name>
<dbReference type="EC" id="6.3.4.19" evidence="1"/>
<dbReference type="EMBL" id="CP001091">
    <property type="protein sequence ID" value="ACE62254.1"/>
    <property type="molecule type" value="Genomic_DNA"/>
</dbReference>
<dbReference type="RefSeq" id="WP_005618010.1">
    <property type="nucleotide sequence ID" value="NC_010939.1"/>
</dbReference>
<dbReference type="SMR" id="B3GYM3"/>
<dbReference type="KEGG" id="apa:APP7_1602"/>
<dbReference type="HOGENOM" id="CLU_018869_2_0_6"/>
<dbReference type="Proteomes" id="UP000001226">
    <property type="component" value="Chromosome"/>
</dbReference>
<dbReference type="GO" id="GO:0005737">
    <property type="term" value="C:cytoplasm"/>
    <property type="evidence" value="ECO:0007669"/>
    <property type="project" value="UniProtKB-SubCell"/>
</dbReference>
<dbReference type="GO" id="GO:0005524">
    <property type="term" value="F:ATP binding"/>
    <property type="evidence" value="ECO:0007669"/>
    <property type="project" value="UniProtKB-UniRule"/>
</dbReference>
<dbReference type="GO" id="GO:0032267">
    <property type="term" value="F:tRNA(Ile)-lysidine synthase activity"/>
    <property type="evidence" value="ECO:0007669"/>
    <property type="project" value="UniProtKB-EC"/>
</dbReference>
<dbReference type="GO" id="GO:0006400">
    <property type="term" value="P:tRNA modification"/>
    <property type="evidence" value="ECO:0007669"/>
    <property type="project" value="UniProtKB-UniRule"/>
</dbReference>
<dbReference type="CDD" id="cd01992">
    <property type="entry name" value="TilS_N"/>
    <property type="match status" value="1"/>
</dbReference>
<dbReference type="Gene3D" id="1.20.59.20">
    <property type="match status" value="1"/>
</dbReference>
<dbReference type="Gene3D" id="3.40.50.620">
    <property type="entry name" value="HUPs"/>
    <property type="match status" value="1"/>
</dbReference>
<dbReference type="HAMAP" id="MF_01161">
    <property type="entry name" value="tRNA_Ile_lys_synt"/>
    <property type="match status" value="1"/>
</dbReference>
<dbReference type="InterPro" id="IPR012796">
    <property type="entry name" value="Lysidine-tRNA-synth_C"/>
</dbReference>
<dbReference type="InterPro" id="IPR014729">
    <property type="entry name" value="Rossmann-like_a/b/a_fold"/>
</dbReference>
<dbReference type="InterPro" id="IPR011063">
    <property type="entry name" value="TilS/TtcA_N"/>
</dbReference>
<dbReference type="InterPro" id="IPR012094">
    <property type="entry name" value="tRNA_Ile_lys_synt"/>
</dbReference>
<dbReference type="InterPro" id="IPR012795">
    <property type="entry name" value="tRNA_Ile_lys_synt_N"/>
</dbReference>
<dbReference type="InterPro" id="IPR015262">
    <property type="entry name" value="tRNA_Ile_lys_synt_subst-bd"/>
</dbReference>
<dbReference type="NCBIfam" id="TIGR02433">
    <property type="entry name" value="lysidine_TilS_C"/>
    <property type="match status" value="1"/>
</dbReference>
<dbReference type="NCBIfam" id="TIGR02432">
    <property type="entry name" value="lysidine_TilS_N"/>
    <property type="match status" value="1"/>
</dbReference>
<dbReference type="PANTHER" id="PTHR43033">
    <property type="entry name" value="TRNA(ILE)-LYSIDINE SYNTHASE-RELATED"/>
    <property type="match status" value="1"/>
</dbReference>
<dbReference type="PANTHER" id="PTHR43033:SF1">
    <property type="entry name" value="TRNA(ILE)-LYSIDINE SYNTHASE-RELATED"/>
    <property type="match status" value="1"/>
</dbReference>
<dbReference type="Pfam" id="PF01171">
    <property type="entry name" value="ATP_bind_3"/>
    <property type="match status" value="1"/>
</dbReference>
<dbReference type="Pfam" id="PF09179">
    <property type="entry name" value="TilS"/>
    <property type="match status" value="1"/>
</dbReference>
<dbReference type="Pfam" id="PF11734">
    <property type="entry name" value="TilS_C"/>
    <property type="match status" value="1"/>
</dbReference>
<dbReference type="SUPFAM" id="SSF52402">
    <property type="entry name" value="Adenine nucleotide alpha hydrolases-like"/>
    <property type="match status" value="1"/>
</dbReference>
<dbReference type="SUPFAM" id="SSF82829">
    <property type="entry name" value="MesJ substrate recognition domain-like"/>
    <property type="match status" value="1"/>
</dbReference>
<dbReference type="SUPFAM" id="SSF56037">
    <property type="entry name" value="PheT/TilS domain"/>
    <property type="match status" value="1"/>
</dbReference>
<comment type="function">
    <text evidence="1">Ligates lysine onto the cytidine present at position 34 of the AUA codon-specific tRNA(Ile) that contains the anticodon CAU, in an ATP-dependent manner. Cytidine is converted to lysidine, thus changing the amino acid specificity of the tRNA from methionine to isoleucine.</text>
</comment>
<comment type="catalytic activity">
    <reaction evidence="1">
        <text>cytidine(34) in tRNA(Ile2) + L-lysine + ATP = lysidine(34) in tRNA(Ile2) + AMP + diphosphate + H(+)</text>
        <dbReference type="Rhea" id="RHEA:43744"/>
        <dbReference type="Rhea" id="RHEA-COMP:10625"/>
        <dbReference type="Rhea" id="RHEA-COMP:10670"/>
        <dbReference type="ChEBI" id="CHEBI:15378"/>
        <dbReference type="ChEBI" id="CHEBI:30616"/>
        <dbReference type="ChEBI" id="CHEBI:32551"/>
        <dbReference type="ChEBI" id="CHEBI:33019"/>
        <dbReference type="ChEBI" id="CHEBI:82748"/>
        <dbReference type="ChEBI" id="CHEBI:83665"/>
        <dbReference type="ChEBI" id="CHEBI:456215"/>
        <dbReference type="EC" id="6.3.4.19"/>
    </reaction>
</comment>
<comment type="subcellular location">
    <subcellularLocation>
        <location evidence="1">Cytoplasm</location>
    </subcellularLocation>
</comment>
<comment type="domain">
    <text>The N-terminal region contains the highly conserved SGGXDS motif, predicted to be a P-loop motif involved in ATP binding.</text>
</comment>
<comment type="similarity">
    <text evidence="1">Belongs to the tRNA(Ile)-lysidine synthase family.</text>
</comment>
<feature type="chain" id="PRO_1000137860" description="tRNA(Ile)-lysidine synthase">
    <location>
        <begin position="1"/>
        <end position="419"/>
    </location>
</feature>
<feature type="binding site" evidence="1">
    <location>
        <begin position="25"/>
        <end position="30"/>
    </location>
    <ligand>
        <name>ATP</name>
        <dbReference type="ChEBI" id="CHEBI:30616"/>
    </ligand>
</feature>
<evidence type="ECO:0000255" key="1">
    <source>
        <dbReference type="HAMAP-Rule" id="MF_01161"/>
    </source>
</evidence>
<gene>
    <name evidence="1" type="primary">tilS</name>
    <name type="ordered locus">APP7_1602</name>
</gene>
<reference key="1">
    <citation type="submission" date="2008-06" db="EMBL/GenBank/DDBJ databases">
        <title>Genome and proteome analysis of A. pleuropneumoniae serotype 7.</title>
        <authorList>
            <person name="Linke B."/>
            <person name="Buettner F."/>
            <person name="Martinez-Arias R."/>
            <person name="Goesmann A."/>
            <person name="Baltes N."/>
            <person name="Tegetmeyer H."/>
            <person name="Singh M."/>
            <person name="Gerlach G.F."/>
        </authorList>
    </citation>
    <scope>NUCLEOTIDE SEQUENCE [LARGE SCALE GENOMIC DNA]</scope>
    <source>
        <strain>AP76</strain>
    </source>
</reference>
<keyword id="KW-0067">ATP-binding</keyword>
<keyword id="KW-0963">Cytoplasm</keyword>
<keyword id="KW-0436">Ligase</keyword>
<keyword id="KW-0547">Nucleotide-binding</keyword>
<keyword id="KW-0819">tRNA processing</keyword>
<protein>
    <recommendedName>
        <fullName evidence="1">tRNA(Ile)-lysidine synthase</fullName>
        <ecNumber evidence="1">6.3.4.19</ecNumber>
    </recommendedName>
    <alternativeName>
        <fullName evidence="1">tRNA(Ile)-2-lysyl-cytidine synthase</fullName>
    </alternativeName>
    <alternativeName>
        <fullName evidence="1">tRNA(Ile)-lysidine synthetase</fullName>
    </alternativeName>
</protein>
<proteinExistence type="inferred from homology"/>
<accession>B3GYM3</accession>
<organism>
    <name type="scientific">Actinobacillus pleuropneumoniae serotype 7 (strain AP76)</name>
    <dbReference type="NCBI Taxonomy" id="537457"/>
    <lineage>
        <taxon>Bacteria</taxon>
        <taxon>Pseudomonadati</taxon>
        <taxon>Pseudomonadota</taxon>
        <taxon>Gammaproteobacteria</taxon>
        <taxon>Pasteurellales</taxon>
        <taxon>Pasteurellaceae</taxon>
        <taxon>Actinobacillus</taxon>
    </lineage>
</organism>